<name>6PGL_SHISS</name>
<dbReference type="EC" id="3.1.1.31" evidence="1"/>
<dbReference type="EMBL" id="CP000038">
    <property type="protein sequence ID" value="AAZ87490.1"/>
    <property type="molecule type" value="Genomic_DNA"/>
</dbReference>
<dbReference type="RefSeq" id="WP_000815431.1">
    <property type="nucleotide sequence ID" value="NC_007384.1"/>
</dbReference>
<dbReference type="SMR" id="Q3Z422"/>
<dbReference type="KEGG" id="ssn:SSON_0741"/>
<dbReference type="HOGENOM" id="CLU_038716_2_0_6"/>
<dbReference type="UniPathway" id="UPA00115">
    <property type="reaction ID" value="UER00409"/>
</dbReference>
<dbReference type="Proteomes" id="UP000002529">
    <property type="component" value="Chromosome"/>
</dbReference>
<dbReference type="GO" id="GO:0005829">
    <property type="term" value="C:cytosol"/>
    <property type="evidence" value="ECO:0007669"/>
    <property type="project" value="TreeGrafter"/>
</dbReference>
<dbReference type="GO" id="GO:0017057">
    <property type="term" value="F:6-phosphogluconolactonase activity"/>
    <property type="evidence" value="ECO:0007669"/>
    <property type="project" value="UniProtKB-UniRule"/>
</dbReference>
<dbReference type="GO" id="GO:0006006">
    <property type="term" value="P:glucose metabolic process"/>
    <property type="evidence" value="ECO:0007669"/>
    <property type="project" value="UniProtKB-KW"/>
</dbReference>
<dbReference type="GO" id="GO:0009051">
    <property type="term" value="P:pentose-phosphate shunt, oxidative branch"/>
    <property type="evidence" value="ECO:0007669"/>
    <property type="project" value="UniProtKB-UniRule"/>
</dbReference>
<dbReference type="FunFam" id="2.130.10.10:FF:000051">
    <property type="entry name" value="6-phosphogluconolactonase"/>
    <property type="match status" value="1"/>
</dbReference>
<dbReference type="Gene3D" id="2.130.10.10">
    <property type="entry name" value="YVTN repeat-like/Quinoprotein amine dehydrogenase"/>
    <property type="match status" value="1"/>
</dbReference>
<dbReference type="HAMAP" id="MF_01605">
    <property type="entry name" value="6P_gluconolactonase"/>
    <property type="match status" value="1"/>
</dbReference>
<dbReference type="InterPro" id="IPR022528">
    <property type="entry name" value="6-phosphogluconolactonase_YbhE"/>
</dbReference>
<dbReference type="InterPro" id="IPR050282">
    <property type="entry name" value="Cycloisomerase_2"/>
</dbReference>
<dbReference type="InterPro" id="IPR019405">
    <property type="entry name" value="Lactonase_7-beta_prop"/>
</dbReference>
<dbReference type="InterPro" id="IPR011045">
    <property type="entry name" value="N2O_reductase_N"/>
</dbReference>
<dbReference type="InterPro" id="IPR015943">
    <property type="entry name" value="WD40/YVTN_repeat-like_dom_sf"/>
</dbReference>
<dbReference type="NCBIfam" id="NF008258">
    <property type="entry name" value="PRK11028.1"/>
    <property type="match status" value="1"/>
</dbReference>
<dbReference type="PANTHER" id="PTHR30344:SF1">
    <property type="entry name" value="6-PHOSPHOGLUCONOLACTONASE"/>
    <property type="match status" value="1"/>
</dbReference>
<dbReference type="PANTHER" id="PTHR30344">
    <property type="entry name" value="6-PHOSPHOGLUCONOLACTONASE-RELATED"/>
    <property type="match status" value="1"/>
</dbReference>
<dbReference type="Pfam" id="PF10282">
    <property type="entry name" value="Lactonase"/>
    <property type="match status" value="1"/>
</dbReference>
<dbReference type="SUPFAM" id="SSF50974">
    <property type="entry name" value="Nitrous oxide reductase, N-terminal domain"/>
    <property type="match status" value="1"/>
</dbReference>
<proteinExistence type="inferred from homology"/>
<gene>
    <name evidence="1" type="primary">pgl</name>
    <name type="ordered locus">SSON_0741</name>
</gene>
<protein>
    <recommendedName>
        <fullName evidence="1">6-phosphogluconolactonase</fullName>
        <shortName evidence="1">6-P-gluconolactonase</shortName>
        <ecNumber evidence="1">3.1.1.31</ecNumber>
    </recommendedName>
</protein>
<evidence type="ECO:0000255" key="1">
    <source>
        <dbReference type="HAMAP-Rule" id="MF_01605"/>
    </source>
</evidence>
<feature type="chain" id="PRO_0000291472" description="6-phosphogluconolactonase">
    <location>
        <begin position="1"/>
        <end position="331"/>
    </location>
</feature>
<feature type="modified residue" description="N6-acetyllysine" evidence="1">
    <location>
        <position position="287"/>
    </location>
</feature>
<sequence>MKQTVYIASPESQQIHVWNLNHEGALTLTQVVDVPGQVQPMVVSPDKRYLYVGVRPEFRVLAYRIAPDDGALTFAAESALPGSPTHISTDHQGQFVFVGSYNAGNVSVTRLEDGLPVGVVDVVEGLDGCHSANISPDNRTLWVPALKQDRICLFTVSDDGHLVAQDPAEVTTVEGAGPRHMVFHPNEQYAYCVNELNSSVDVWELKDPHGNIECVQTLDMMPENFSDTCWAADIHITPDGRHLYACDRTASLITVFSVSEDGSVLSKEGFQPTETQPRGFNVDHSGKYLIVAGQKSHHISVYEIVGEQGLLHEKGRYAVGQGPMWVVVNAH</sequence>
<comment type="function">
    <text evidence="1">Catalyzes the hydrolysis of 6-phosphogluconolactone to 6-phosphogluconate.</text>
</comment>
<comment type="catalytic activity">
    <reaction evidence="1">
        <text>6-phospho-D-glucono-1,5-lactone + H2O = 6-phospho-D-gluconate + H(+)</text>
        <dbReference type="Rhea" id="RHEA:12556"/>
        <dbReference type="ChEBI" id="CHEBI:15377"/>
        <dbReference type="ChEBI" id="CHEBI:15378"/>
        <dbReference type="ChEBI" id="CHEBI:57955"/>
        <dbReference type="ChEBI" id="CHEBI:58759"/>
        <dbReference type="EC" id="3.1.1.31"/>
    </reaction>
</comment>
<comment type="pathway">
    <text evidence="1">Carbohydrate degradation; pentose phosphate pathway; D-ribulose 5-phosphate from D-glucose 6-phosphate (oxidative stage): step 2/3.</text>
</comment>
<comment type="similarity">
    <text evidence="1">Belongs to the cycloisomerase 2 family.</text>
</comment>
<organism>
    <name type="scientific">Shigella sonnei (strain Ss046)</name>
    <dbReference type="NCBI Taxonomy" id="300269"/>
    <lineage>
        <taxon>Bacteria</taxon>
        <taxon>Pseudomonadati</taxon>
        <taxon>Pseudomonadota</taxon>
        <taxon>Gammaproteobacteria</taxon>
        <taxon>Enterobacterales</taxon>
        <taxon>Enterobacteriaceae</taxon>
        <taxon>Shigella</taxon>
    </lineage>
</organism>
<accession>Q3Z422</accession>
<keyword id="KW-0007">Acetylation</keyword>
<keyword id="KW-0119">Carbohydrate metabolism</keyword>
<keyword id="KW-0313">Glucose metabolism</keyword>
<keyword id="KW-0378">Hydrolase</keyword>
<keyword id="KW-1185">Reference proteome</keyword>
<reference key="1">
    <citation type="journal article" date="2005" name="Nucleic Acids Res.">
        <title>Genome dynamics and diversity of Shigella species, the etiologic agents of bacillary dysentery.</title>
        <authorList>
            <person name="Yang F."/>
            <person name="Yang J."/>
            <person name="Zhang X."/>
            <person name="Chen L."/>
            <person name="Jiang Y."/>
            <person name="Yan Y."/>
            <person name="Tang X."/>
            <person name="Wang J."/>
            <person name="Xiong Z."/>
            <person name="Dong J."/>
            <person name="Xue Y."/>
            <person name="Zhu Y."/>
            <person name="Xu X."/>
            <person name="Sun L."/>
            <person name="Chen S."/>
            <person name="Nie H."/>
            <person name="Peng J."/>
            <person name="Xu J."/>
            <person name="Wang Y."/>
            <person name="Yuan Z."/>
            <person name="Wen Y."/>
            <person name="Yao Z."/>
            <person name="Shen Y."/>
            <person name="Qiang B."/>
            <person name="Hou Y."/>
            <person name="Yu J."/>
            <person name="Jin Q."/>
        </authorList>
    </citation>
    <scope>NUCLEOTIDE SEQUENCE [LARGE SCALE GENOMIC DNA]</scope>
    <source>
        <strain>Ss046</strain>
    </source>
</reference>